<organism>
    <name type="scientific">Helicobacter hepaticus (strain ATCC 51449 / 3B1)</name>
    <dbReference type="NCBI Taxonomy" id="235279"/>
    <lineage>
        <taxon>Bacteria</taxon>
        <taxon>Pseudomonadati</taxon>
        <taxon>Campylobacterota</taxon>
        <taxon>Epsilonproteobacteria</taxon>
        <taxon>Campylobacterales</taxon>
        <taxon>Helicobacteraceae</taxon>
        <taxon>Helicobacter</taxon>
    </lineage>
</organism>
<proteinExistence type="inferred from homology"/>
<gene>
    <name type="primary">cdtA</name>
    <name type="ordered locus">HH_1446</name>
</gene>
<name>CDTA_HELHP</name>
<evidence type="ECO:0000250" key="1"/>
<evidence type="ECO:0000255" key="2">
    <source>
        <dbReference type="PROSITE-ProRule" id="PRU00174"/>
    </source>
</evidence>
<evidence type="ECO:0000255" key="3">
    <source>
        <dbReference type="PROSITE-ProRule" id="PRU00303"/>
    </source>
</evidence>
<evidence type="ECO:0000256" key="4">
    <source>
        <dbReference type="SAM" id="MobiDB-lite"/>
    </source>
</evidence>
<evidence type="ECO:0000305" key="5"/>
<reference key="1">
    <citation type="journal article" date="2000" name="Infect. Immun.">
        <title>Cytolethal distending toxin sequence and activity in the enterohepatic pathogen Helicobacter hepaticus.</title>
        <authorList>
            <person name="Young V.B."/>
            <person name="Knox K.A."/>
            <person name="Schauer D.B."/>
        </authorList>
    </citation>
    <scope>NUCLEOTIDE SEQUENCE [GENOMIC DNA]</scope>
    <source>
        <strain>ATCC 51449 / 3B1</strain>
    </source>
</reference>
<reference key="2">
    <citation type="journal article" date="2003" name="Proc. Natl. Acad. Sci. U.S.A.">
        <title>The complete genome sequence of the carcinogenic bacterium Helicobacter hepaticus.</title>
        <authorList>
            <person name="Suerbaum S."/>
            <person name="Josenhans C."/>
            <person name="Sterzenbach T."/>
            <person name="Drescher B."/>
            <person name="Brandt P."/>
            <person name="Bell M."/>
            <person name="Droege M."/>
            <person name="Fartmann B."/>
            <person name="Fischer H.-P."/>
            <person name="Ge Z."/>
            <person name="Hoerster A."/>
            <person name="Holland R."/>
            <person name="Klein K."/>
            <person name="Koenig J."/>
            <person name="Macko L."/>
            <person name="Mendz G.L."/>
            <person name="Nyakatura G."/>
            <person name="Schauer D.B."/>
            <person name="Shen Z."/>
            <person name="Weber J."/>
            <person name="Frosch M."/>
            <person name="Fox J.G."/>
        </authorList>
    </citation>
    <scope>NUCLEOTIDE SEQUENCE [LARGE SCALE GENOMIC DNA]</scope>
    <source>
        <strain>ATCC 51449 / 3B1</strain>
    </source>
</reference>
<feature type="signal peptide" evidence="3">
    <location>
        <begin position="1"/>
        <end position="15"/>
    </location>
</feature>
<feature type="chain" id="PRO_0000013372" description="Cytolethal distending toxin subunit A">
    <location>
        <begin position="16"/>
        <end position="231"/>
    </location>
</feature>
<feature type="domain" description="Ricin B-type lectin" evidence="2">
    <location>
        <begin position="130"/>
        <end position="217"/>
    </location>
</feature>
<feature type="region of interest" description="Disordered" evidence="4">
    <location>
        <begin position="20"/>
        <end position="51"/>
    </location>
</feature>
<feature type="region of interest" description="Mediates binding to target cells" evidence="1">
    <location>
        <begin position="99"/>
        <end position="110"/>
    </location>
</feature>
<feature type="lipid moiety-binding region" description="N-palmitoyl cysteine" evidence="3">
    <location>
        <position position="16"/>
    </location>
</feature>
<feature type="lipid moiety-binding region" description="S-diacylglycerol cysteine" evidence="3">
    <location>
        <position position="16"/>
    </location>
</feature>
<accession>Q9RFY6</accession>
<protein>
    <recommendedName>
        <fullName>Cytolethal distending toxin subunit A</fullName>
        <shortName>CDT A</shortName>
    </recommendedName>
</protein>
<keyword id="KW-0998">Cell outer membrane</keyword>
<keyword id="KW-0430">Lectin</keyword>
<keyword id="KW-0449">Lipoprotein</keyword>
<keyword id="KW-0472">Membrane</keyword>
<keyword id="KW-0564">Palmitate</keyword>
<keyword id="KW-1185">Reference proteome</keyword>
<keyword id="KW-0732">Signal</keyword>
<keyword id="KW-0800">Toxin</keyword>
<keyword id="KW-0843">Virulence</keyword>
<sequence>MRLLFFLLITLLFAACSSTPKVHQPKHSSKTEKDLGIGLSPTPPPNERIPGEKSRAMLMEMEGREIPVRIPDANASKIDKNVSNPISIMSSSGGLLTLWALKPRNWVWGYTPIDSFEFGRAKFWRIISFSNGQVIIKNMQEGTCLQAYGNGVIHDICDSKNQAQLWNLNFFDNQAIQIQSVSAKTCLQTPTVRTTTYYSIYLTKCATSSNLDQQWYITPVALEPEPIFFIK</sequence>
<dbReference type="EMBL" id="AF163667">
    <property type="protein sequence ID" value="AAF19157.1"/>
    <property type="molecule type" value="Genomic_DNA"/>
</dbReference>
<dbReference type="EMBL" id="AE017125">
    <property type="protein sequence ID" value="AAP78043.1"/>
    <property type="molecule type" value="Genomic_DNA"/>
</dbReference>
<dbReference type="RefSeq" id="WP_011116286.1">
    <property type="nucleotide sequence ID" value="NC_004917.1"/>
</dbReference>
<dbReference type="SMR" id="Q9RFY6"/>
<dbReference type="STRING" id="235279.HH_1446"/>
<dbReference type="KEGG" id="hhe:HH_1446"/>
<dbReference type="eggNOG" id="ENOG50347HZ">
    <property type="taxonomic scope" value="Bacteria"/>
</dbReference>
<dbReference type="HOGENOM" id="CLU_090932_0_0_7"/>
<dbReference type="OrthoDB" id="5353389at2"/>
<dbReference type="Proteomes" id="UP000002495">
    <property type="component" value="Chromosome"/>
</dbReference>
<dbReference type="GO" id="GO:0009279">
    <property type="term" value="C:cell outer membrane"/>
    <property type="evidence" value="ECO:0007669"/>
    <property type="project" value="UniProtKB-SubCell"/>
</dbReference>
<dbReference type="GO" id="GO:0030246">
    <property type="term" value="F:carbohydrate binding"/>
    <property type="evidence" value="ECO:0007669"/>
    <property type="project" value="UniProtKB-KW"/>
</dbReference>
<dbReference type="GO" id="GO:0090729">
    <property type="term" value="F:toxin activity"/>
    <property type="evidence" value="ECO:0007669"/>
    <property type="project" value="UniProtKB-KW"/>
</dbReference>
<dbReference type="CDD" id="cd23414">
    <property type="entry name" value="beta-trefoil_Ricin_CdtA"/>
    <property type="match status" value="1"/>
</dbReference>
<dbReference type="Gene3D" id="2.80.10.50">
    <property type="match status" value="1"/>
</dbReference>
<dbReference type="InterPro" id="IPR015957">
    <property type="entry name" value="CDtoxinA"/>
</dbReference>
<dbReference type="InterPro" id="IPR003558">
    <property type="entry name" value="CDtoxinA/C"/>
</dbReference>
<dbReference type="InterPro" id="IPR035992">
    <property type="entry name" value="Ricin_B-like_lectins"/>
</dbReference>
<dbReference type="Pfam" id="PF03498">
    <property type="entry name" value="CDtoxinA"/>
    <property type="match status" value="1"/>
</dbReference>
<dbReference type="PIRSF" id="PIRSF036516">
    <property type="entry name" value="CDT_A"/>
    <property type="match status" value="1"/>
</dbReference>
<dbReference type="PRINTS" id="PR01387">
    <property type="entry name" value="CDTOXINA"/>
</dbReference>
<dbReference type="SUPFAM" id="SSF50370">
    <property type="entry name" value="Ricin B-like lectins"/>
    <property type="match status" value="1"/>
</dbReference>
<dbReference type="PROSITE" id="PS51257">
    <property type="entry name" value="PROKAR_LIPOPROTEIN"/>
    <property type="match status" value="1"/>
</dbReference>
<dbReference type="PROSITE" id="PS50231">
    <property type="entry name" value="RICIN_B_LECTIN"/>
    <property type="match status" value="1"/>
</dbReference>
<comment type="function">
    <text>CDTs are cytotoxins which induce cell distension, growth arrest in G2/M phase, nucleus swelling, and chromatin fragmentation in HeLa cells.</text>
</comment>
<comment type="subunit">
    <text>Heterotrimer of 3 subunits, CdtA, CdtB and CdtC.</text>
</comment>
<comment type="subcellular location">
    <subcellularLocation>
        <location evidence="5">Cell outer membrane</location>
        <topology evidence="5">Lipid-anchor</topology>
    </subcellularLocation>
</comment>